<gene>
    <name evidence="6" type="primary">Tmem160</name>
</gene>
<dbReference type="EMBL" id="AK007386">
    <property type="protein sequence ID" value="BAB25003.1"/>
    <property type="molecule type" value="mRNA"/>
</dbReference>
<dbReference type="EMBL" id="AK166985">
    <property type="protein sequence ID" value="BAE39166.1"/>
    <property type="molecule type" value="mRNA"/>
</dbReference>
<dbReference type="EMBL" id="BC028534">
    <property type="protein sequence ID" value="AAH28534.1"/>
    <property type="molecule type" value="mRNA"/>
</dbReference>
<dbReference type="CCDS" id="CCDS20849.1"/>
<dbReference type="RefSeq" id="NP_081214.1">
    <property type="nucleotide sequence ID" value="NM_026938.2"/>
</dbReference>
<dbReference type="BioGRID" id="213224">
    <property type="interactions" value="6"/>
</dbReference>
<dbReference type="FunCoup" id="Q9D938">
    <property type="interactions" value="458"/>
</dbReference>
<dbReference type="STRING" id="10090.ENSMUSP00000019302"/>
<dbReference type="iPTMnet" id="Q9D938"/>
<dbReference type="PhosphoSitePlus" id="Q9D938"/>
<dbReference type="PaxDb" id="10090-ENSMUSP00000019302"/>
<dbReference type="PeptideAtlas" id="Q9D938"/>
<dbReference type="ProteomicsDB" id="259539"/>
<dbReference type="Pumba" id="Q9D938"/>
<dbReference type="Antibodypedia" id="65063">
    <property type="antibodies" value="14 antibodies from 12 providers"/>
</dbReference>
<dbReference type="DNASU" id="69094"/>
<dbReference type="Ensembl" id="ENSMUST00000019302.10">
    <property type="protein sequence ID" value="ENSMUSP00000019302.9"/>
    <property type="gene ID" value="ENSMUSG00000019158.10"/>
</dbReference>
<dbReference type="GeneID" id="69094"/>
<dbReference type="KEGG" id="mmu:69094"/>
<dbReference type="UCSC" id="uc009fhu.1">
    <property type="organism name" value="mouse"/>
</dbReference>
<dbReference type="AGR" id="MGI:1916344"/>
<dbReference type="CTD" id="54958"/>
<dbReference type="MGI" id="MGI:1916344">
    <property type="gene designation" value="Tmem160"/>
</dbReference>
<dbReference type="VEuPathDB" id="HostDB:ENSMUSG00000019158"/>
<dbReference type="eggNOG" id="ENOG502S3E7">
    <property type="taxonomic scope" value="Eukaryota"/>
</dbReference>
<dbReference type="GeneTree" id="ENSGT00390000012863"/>
<dbReference type="HOGENOM" id="CLU_110295_0_0_1"/>
<dbReference type="InParanoid" id="Q9D938"/>
<dbReference type="OMA" id="WWARARL"/>
<dbReference type="OrthoDB" id="9944412at2759"/>
<dbReference type="PhylomeDB" id="Q9D938"/>
<dbReference type="TreeFam" id="TF338764"/>
<dbReference type="BioGRID-ORCS" id="69094">
    <property type="hits" value="3 hits in 77 CRISPR screens"/>
</dbReference>
<dbReference type="ChiTaRS" id="Tmem160">
    <property type="organism name" value="mouse"/>
</dbReference>
<dbReference type="PRO" id="PR:Q9D938"/>
<dbReference type="Proteomes" id="UP000000589">
    <property type="component" value="Chromosome 7"/>
</dbReference>
<dbReference type="RNAct" id="Q9D938">
    <property type="molecule type" value="protein"/>
</dbReference>
<dbReference type="Bgee" id="ENSMUSG00000019158">
    <property type="expression patterns" value="Expressed in choroid plexus of fourth ventricle and 254 other cell types or tissues"/>
</dbReference>
<dbReference type="ExpressionAtlas" id="Q9D938">
    <property type="expression patterns" value="baseline and differential"/>
</dbReference>
<dbReference type="GO" id="GO:0005743">
    <property type="term" value="C:mitochondrial inner membrane"/>
    <property type="evidence" value="ECO:0000250"/>
    <property type="project" value="UniProtKB"/>
</dbReference>
<dbReference type="GO" id="GO:0005739">
    <property type="term" value="C:mitochondrion"/>
    <property type="evidence" value="ECO:0007005"/>
    <property type="project" value="MGI"/>
</dbReference>
<dbReference type="InterPro" id="IPR026801">
    <property type="entry name" value="TMEM160"/>
</dbReference>
<dbReference type="PANTHER" id="PTHR16236">
    <property type="entry name" value="TRANSMEMBRANE PROTEIN 160"/>
    <property type="match status" value="1"/>
</dbReference>
<dbReference type="PANTHER" id="PTHR16236:SF0">
    <property type="entry name" value="TRANSMEMBRANE PROTEIN 160"/>
    <property type="match status" value="1"/>
</dbReference>
<reference key="1">
    <citation type="journal article" date="2005" name="Science">
        <title>The transcriptional landscape of the mammalian genome.</title>
        <authorList>
            <person name="Carninci P."/>
            <person name="Kasukawa T."/>
            <person name="Katayama S."/>
            <person name="Gough J."/>
            <person name="Frith M.C."/>
            <person name="Maeda N."/>
            <person name="Oyama R."/>
            <person name="Ravasi T."/>
            <person name="Lenhard B."/>
            <person name="Wells C."/>
            <person name="Kodzius R."/>
            <person name="Shimokawa K."/>
            <person name="Bajic V.B."/>
            <person name="Brenner S.E."/>
            <person name="Batalov S."/>
            <person name="Forrest A.R."/>
            <person name="Zavolan M."/>
            <person name="Davis M.J."/>
            <person name="Wilming L.G."/>
            <person name="Aidinis V."/>
            <person name="Allen J.E."/>
            <person name="Ambesi-Impiombato A."/>
            <person name="Apweiler R."/>
            <person name="Aturaliya R.N."/>
            <person name="Bailey T.L."/>
            <person name="Bansal M."/>
            <person name="Baxter L."/>
            <person name="Beisel K.W."/>
            <person name="Bersano T."/>
            <person name="Bono H."/>
            <person name="Chalk A.M."/>
            <person name="Chiu K.P."/>
            <person name="Choudhary V."/>
            <person name="Christoffels A."/>
            <person name="Clutterbuck D.R."/>
            <person name="Crowe M.L."/>
            <person name="Dalla E."/>
            <person name="Dalrymple B.P."/>
            <person name="de Bono B."/>
            <person name="Della Gatta G."/>
            <person name="di Bernardo D."/>
            <person name="Down T."/>
            <person name="Engstrom P."/>
            <person name="Fagiolini M."/>
            <person name="Faulkner G."/>
            <person name="Fletcher C.F."/>
            <person name="Fukushima T."/>
            <person name="Furuno M."/>
            <person name="Futaki S."/>
            <person name="Gariboldi M."/>
            <person name="Georgii-Hemming P."/>
            <person name="Gingeras T.R."/>
            <person name="Gojobori T."/>
            <person name="Green R.E."/>
            <person name="Gustincich S."/>
            <person name="Harbers M."/>
            <person name="Hayashi Y."/>
            <person name="Hensch T.K."/>
            <person name="Hirokawa N."/>
            <person name="Hill D."/>
            <person name="Huminiecki L."/>
            <person name="Iacono M."/>
            <person name="Ikeo K."/>
            <person name="Iwama A."/>
            <person name="Ishikawa T."/>
            <person name="Jakt M."/>
            <person name="Kanapin A."/>
            <person name="Katoh M."/>
            <person name="Kawasawa Y."/>
            <person name="Kelso J."/>
            <person name="Kitamura H."/>
            <person name="Kitano H."/>
            <person name="Kollias G."/>
            <person name="Krishnan S.P."/>
            <person name="Kruger A."/>
            <person name="Kummerfeld S.K."/>
            <person name="Kurochkin I.V."/>
            <person name="Lareau L.F."/>
            <person name="Lazarevic D."/>
            <person name="Lipovich L."/>
            <person name="Liu J."/>
            <person name="Liuni S."/>
            <person name="McWilliam S."/>
            <person name="Madan Babu M."/>
            <person name="Madera M."/>
            <person name="Marchionni L."/>
            <person name="Matsuda H."/>
            <person name="Matsuzawa S."/>
            <person name="Miki H."/>
            <person name="Mignone F."/>
            <person name="Miyake S."/>
            <person name="Morris K."/>
            <person name="Mottagui-Tabar S."/>
            <person name="Mulder N."/>
            <person name="Nakano N."/>
            <person name="Nakauchi H."/>
            <person name="Ng P."/>
            <person name="Nilsson R."/>
            <person name="Nishiguchi S."/>
            <person name="Nishikawa S."/>
            <person name="Nori F."/>
            <person name="Ohara O."/>
            <person name="Okazaki Y."/>
            <person name="Orlando V."/>
            <person name="Pang K.C."/>
            <person name="Pavan W.J."/>
            <person name="Pavesi G."/>
            <person name="Pesole G."/>
            <person name="Petrovsky N."/>
            <person name="Piazza S."/>
            <person name="Reed J."/>
            <person name="Reid J.F."/>
            <person name="Ring B.Z."/>
            <person name="Ringwald M."/>
            <person name="Rost B."/>
            <person name="Ruan Y."/>
            <person name="Salzberg S.L."/>
            <person name="Sandelin A."/>
            <person name="Schneider C."/>
            <person name="Schoenbach C."/>
            <person name="Sekiguchi K."/>
            <person name="Semple C.A."/>
            <person name="Seno S."/>
            <person name="Sessa L."/>
            <person name="Sheng Y."/>
            <person name="Shibata Y."/>
            <person name="Shimada H."/>
            <person name="Shimada K."/>
            <person name="Silva D."/>
            <person name="Sinclair B."/>
            <person name="Sperling S."/>
            <person name="Stupka E."/>
            <person name="Sugiura K."/>
            <person name="Sultana R."/>
            <person name="Takenaka Y."/>
            <person name="Taki K."/>
            <person name="Tammoja K."/>
            <person name="Tan S.L."/>
            <person name="Tang S."/>
            <person name="Taylor M.S."/>
            <person name="Tegner J."/>
            <person name="Teichmann S.A."/>
            <person name="Ueda H.R."/>
            <person name="van Nimwegen E."/>
            <person name="Verardo R."/>
            <person name="Wei C.L."/>
            <person name="Yagi K."/>
            <person name="Yamanishi H."/>
            <person name="Zabarovsky E."/>
            <person name="Zhu S."/>
            <person name="Zimmer A."/>
            <person name="Hide W."/>
            <person name="Bult C."/>
            <person name="Grimmond S.M."/>
            <person name="Teasdale R.D."/>
            <person name="Liu E.T."/>
            <person name="Brusic V."/>
            <person name="Quackenbush J."/>
            <person name="Wahlestedt C."/>
            <person name="Mattick J.S."/>
            <person name="Hume D.A."/>
            <person name="Kai C."/>
            <person name="Sasaki D."/>
            <person name="Tomaru Y."/>
            <person name="Fukuda S."/>
            <person name="Kanamori-Katayama M."/>
            <person name="Suzuki M."/>
            <person name="Aoki J."/>
            <person name="Arakawa T."/>
            <person name="Iida J."/>
            <person name="Imamura K."/>
            <person name="Itoh M."/>
            <person name="Kato T."/>
            <person name="Kawaji H."/>
            <person name="Kawagashira N."/>
            <person name="Kawashima T."/>
            <person name="Kojima M."/>
            <person name="Kondo S."/>
            <person name="Konno H."/>
            <person name="Nakano K."/>
            <person name="Ninomiya N."/>
            <person name="Nishio T."/>
            <person name="Okada M."/>
            <person name="Plessy C."/>
            <person name="Shibata K."/>
            <person name="Shiraki T."/>
            <person name="Suzuki S."/>
            <person name="Tagami M."/>
            <person name="Waki K."/>
            <person name="Watahiki A."/>
            <person name="Okamura-Oho Y."/>
            <person name="Suzuki H."/>
            <person name="Kawai J."/>
            <person name="Hayashizaki Y."/>
        </authorList>
    </citation>
    <scope>NUCLEOTIDE SEQUENCE [LARGE SCALE MRNA]</scope>
    <source>
        <strain>C57BL/6J</strain>
        <tissue>Blastocyst</tissue>
        <tissue>Pancreas</tissue>
    </source>
</reference>
<reference key="2">
    <citation type="journal article" date="2004" name="Genome Res.">
        <title>The status, quality, and expansion of the NIH full-length cDNA project: the Mammalian Gene Collection (MGC).</title>
        <authorList>
            <consortium name="The MGC Project Team"/>
        </authorList>
    </citation>
    <scope>NUCLEOTIDE SEQUENCE [LARGE SCALE MRNA]</scope>
    <source>
        <strain>C57BL/6J</strain>
        <tissue>Mammary gland</tissue>
    </source>
</reference>
<reference key="3">
    <citation type="journal article" date="2021" name="Cell Rep.">
        <title>Tmem160 contributes to the establishment of discrete nerve injury-induced pain behaviors in male mice.</title>
        <authorList>
            <person name="Segelcke D."/>
            <person name="Fischer H.K."/>
            <person name="Huette M."/>
            <person name="Dennerlein S."/>
            <person name="Benseler F."/>
            <person name="Brose N."/>
            <person name="Pogatzki-Zahn E.M."/>
            <person name="Schmidt M."/>
        </authorList>
    </citation>
    <scope>DISRUPTION PHENOTYPE</scope>
    <scope>TISSUE SPECIFICITY</scope>
</reference>
<proteinExistence type="evidence at transcript level"/>
<feature type="transit peptide" description="Mitochondrion" evidence="2">
    <location>
        <begin position="1"/>
        <end position="96"/>
    </location>
</feature>
<feature type="chain" id="PRO_0000277811" description="Transmembrane protein 160" evidence="2">
    <location>
        <begin position="97"/>
        <end position="188"/>
    </location>
</feature>
<feature type="transmembrane region" description="Helical" evidence="2">
    <location>
        <begin position="102"/>
        <end position="122"/>
    </location>
</feature>
<feature type="transmembrane region" description="Helical" evidence="2">
    <location>
        <begin position="135"/>
        <end position="155"/>
    </location>
</feature>
<feature type="region of interest" description="Disordered" evidence="3">
    <location>
        <begin position="21"/>
        <end position="53"/>
    </location>
</feature>
<feature type="region of interest" description="Disordered" evidence="3">
    <location>
        <begin position="168"/>
        <end position="188"/>
    </location>
</feature>
<feature type="modified residue" description="Phosphoserine" evidence="1">
    <location>
        <position position="48"/>
    </location>
</feature>
<evidence type="ECO:0000250" key="1">
    <source>
        <dbReference type="UniProtKB" id="Q9NX00"/>
    </source>
</evidence>
<evidence type="ECO:0000255" key="2"/>
<evidence type="ECO:0000256" key="3">
    <source>
        <dbReference type="SAM" id="MobiDB-lite"/>
    </source>
</evidence>
<evidence type="ECO:0000269" key="4">
    <source>
    </source>
</evidence>
<evidence type="ECO:0000305" key="5"/>
<evidence type="ECO:0000312" key="6">
    <source>
        <dbReference type="MGI" id="MGI:1916344"/>
    </source>
</evidence>
<organism>
    <name type="scientific">Mus musculus</name>
    <name type="common">Mouse</name>
    <dbReference type="NCBI Taxonomy" id="10090"/>
    <lineage>
        <taxon>Eukaryota</taxon>
        <taxon>Metazoa</taxon>
        <taxon>Chordata</taxon>
        <taxon>Craniata</taxon>
        <taxon>Vertebrata</taxon>
        <taxon>Euteleostomi</taxon>
        <taxon>Mammalia</taxon>
        <taxon>Eutheria</taxon>
        <taxon>Euarchontoglires</taxon>
        <taxon>Glires</taxon>
        <taxon>Rodentia</taxon>
        <taxon>Myomorpha</taxon>
        <taxon>Muroidea</taxon>
        <taxon>Muridae</taxon>
        <taxon>Murinae</taxon>
        <taxon>Mus</taxon>
        <taxon>Mus</taxon>
    </lineage>
</organism>
<accession>Q9D938</accession>
<accession>Q3TKH9</accession>
<keyword id="KW-0472">Membrane</keyword>
<keyword id="KW-0496">Mitochondrion</keyword>
<keyword id="KW-0999">Mitochondrion inner membrane</keyword>
<keyword id="KW-0597">Phosphoprotein</keyword>
<keyword id="KW-1185">Reference proteome</keyword>
<keyword id="KW-0809">Transit peptide</keyword>
<keyword id="KW-0812">Transmembrane</keyword>
<keyword id="KW-1133">Transmembrane helix</keyword>
<protein>
    <recommendedName>
        <fullName evidence="5">Transmembrane protein 160</fullName>
    </recommendedName>
</protein>
<sequence>MGGGWWWARVARLARLRFRGSLQPPQRPRSGGARGSFAPGHGPRAGASPPPVSELDRADAWLLRKAHETAFLSWFRNGLLSSGIGVISFMQSDMGREAAYGFFLLGGLCVVWGGASYAVGLAALRGPMQLSLAGAAAGVGAVLAASLLWACAVGLYMGQLELDVELVPEDDGAASTEGPDEAGRPPPE</sequence>
<comment type="subcellular location">
    <subcellularLocation>
        <location evidence="1">Mitochondrion inner membrane</location>
        <topology evidence="2">Multi-pass membrane protein</topology>
    </subcellularLocation>
</comment>
<comment type="tissue specificity">
    <text evidence="4">Expressed in peripheral sensory neurons of dorsal root ganglia (DRG).</text>
</comment>
<comment type="disruption phenotype">
    <text evidence="4">Homozygous knockout mice for Tmem160 are healthy and fertile and display normal motor function regarding coordination and locomotion as well as similar somatosensory thresholds for mechanical (tactile) and heat stimulation as wild-type littermates (PubMed:34936870). Homozygous knockout male mice show a delay establishment of tactile hypersensitivity and alterations in selfgrooming after nerve injury (PubMed:34936870). Conditional knockout mice lacking Tmem160 in sensory neurons of dorsal root ganglia (DRG) are healthy and fertile (PubMed:34936870).</text>
</comment>
<comment type="similarity">
    <text evidence="5">Belongs to the TMEM160 family.</text>
</comment>
<name>TM160_MOUSE</name>